<protein>
    <recommendedName>
        <fullName evidence="1">4-diphosphocytidyl-2-C-methyl-D-erythritol kinase</fullName>
        <shortName evidence="1">CMK</shortName>
        <ecNumber evidence="1">2.7.1.148</ecNumber>
    </recommendedName>
    <alternativeName>
        <fullName evidence="1">4-(cytidine-5'-diphospho)-2-C-methyl-D-erythritol kinase</fullName>
    </alternativeName>
</protein>
<feature type="chain" id="PRO_1000007865" description="4-diphosphocytidyl-2-C-methyl-D-erythritol kinase">
    <location>
        <begin position="1"/>
        <end position="303"/>
    </location>
</feature>
<feature type="active site" evidence="1">
    <location>
        <position position="21"/>
    </location>
</feature>
<feature type="active site" evidence="1">
    <location>
        <position position="148"/>
    </location>
</feature>
<feature type="binding site" evidence="1">
    <location>
        <begin position="106"/>
        <end position="116"/>
    </location>
    <ligand>
        <name>ATP</name>
        <dbReference type="ChEBI" id="CHEBI:30616"/>
    </ligand>
</feature>
<organism>
    <name type="scientific">Nitrobacter hamburgensis (strain DSM 10229 / NCIMB 13809 / X14)</name>
    <dbReference type="NCBI Taxonomy" id="323097"/>
    <lineage>
        <taxon>Bacteria</taxon>
        <taxon>Pseudomonadati</taxon>
        <taxon>Pseudomonadota</taxon>
        <taxon>Alphaproteobacteria</taxon>
        <taxon>Hyphomicrobiales</taxon>
        <taxon>Nitrobacteraceae</taxon>
        <taxon>Nitrobacter</taxon>
    </lineage>
</organism>
<reference key="1">
    <citation type="submission" date="2006-03" db="EMBL/GenBank/DDBJ databases">
        <title>Complete sequence of chromosome of Nitrobacter hamburgensis X14.</title>
        <authorList>
            <consortium name="US DOE Joint Genome Institute"/>
            <person name="Copeland A."/>
            <person name="Lucas S."/>
            <person name="Lapidus A."/>
            <person name="Barry K."/>
            <person name="Detter J.C."/>
            <person name="Glavina del Rio T."/>
            <person name="Hammon N."/>
            <person name="Israni S."/>
            <person name="Dalin E."/>
            <person name="Tice H."/>
            <person name="Pitluck S."/>
            <person name="Chain P."/>
            <person name="Malfatti S."/>
            <person name="Shin M."/>
            <person name="Vergez L."/>
            <person name="Schmutz J."/>
            <person name="Larimer F."/>
            <person name="Land M."/>
            <person name="Hauser L."/>
            <person name="Kyrpides N."/>
            <person name="Ivanova N."/>
            <person name="Ward B."/>
            <person name="Arp D."/>
            <person name="Klotz M."/>
            <person name="Stein L."/>
            <person name="O'Mullan G."/>
            <person name="Starkenburg S."/>
            <person name="Sayavedra L."/>
            <person name="Poret-Peterson A.T."/>
            <person name="Gentry M.E."/>
            <person name="Bruce D."/>
            <person name="Richardson P."/>
        </authorList>
    </citation>
    <scope>NUCLEOTIDE SEQUENCE [LARGE SCALE GENOMIC DNA]</scope>
    <source>
        <strain>DSM 10229 / NCIMB 13809 / X14</strain>
    </source>
</reference>
<gene>
    <name evidence="1" type="primary">ispE</name>
    <name type="ordered locus">Nham_3216</name>
</gene>
<accession>Q1QIJ6</accession>
<proteinExistence type="inferred from homology"/>
<sequence>MIVTGATNVKSTELSETARAKVNLTLRVVGRRADGFHDLESVVAFADCVDRLTLMPGTDLSLVAGGPRAQECGQAADNLVLKAARLLGERVANLTTGVFALDKHLPVAAGIGGGSADAAAALRLLARANGIAIGDPRLIEAARLTGADVPVCVCSEACVMTGVGETLQPLGLPAMPAVLVNPRVPVATKDVFAALGLRKGELHVGVSDVIEAIVWPKTGAPMNDWLAMLADGTNDLEPPAIRVQPVIGEVLARLRATGARLSRMSGSGATCFAIFGNEADARNAAQTIRLDRPQWWVHAGTLS</sequence>
<keyword id="KW-0067">ATP-binding</keyword>
<keyword id="KW-0414">Isoprene biosynthesis</keyword>
<keyword id="KW-0418">Kinase</keyword>
<keyword id="KW-0547">Nucleotide-binding</keyword>
<keyword id="KW-1185">Reference proteome</keyword>
<keyword id="KW-0808">Transferase</keyword>
<comment type="function">
    <text evidence="1">Catalyzes the phosphorylation of the position 2 hydroxy group of 4-diphosphocytidyl-2C-methyl-D-erythritol.</text>
</comment>
<comment type="catalytic activity">
    <reaction evidence="1">
        <text>4-CDP-2-C-methyl-D-erythritol + ATP = 4-CDP-2-C-methyl-D-erythritol 2-phosphate + ADP + H(+)</text>
        <dbReference type="Rhea" id="RHEA:18437"/>
        <dbReference type="ChEBI" id="CHEBI:15378"/>
        <dbReference type="ChEBI" id="CHEBI:30616"/>
        <dbReference type="ChEBI" id="CHEBI:57823"/>
        <dbReference type="ChEBI" id="CHEBI:57919"/>
        <dbReference type="ChEBI" id="CHEBI:456216"/>
        <dbReference type="EC" id="2.7.1.148"/>
    </reaction>
</comment>
<comment type="pathway">
    <text evidence="1">Isoprenoid biosynthesis; isopentenyl diphosphate biosynthesis via DXP pathway; isopentenyl diphosphate from 1-deoxy-D-xylulose 5-phosphate: step 3/6.</text>
</comment>
<comment type="similarity">
    <text evidence="1">Belongs to the GHMP kinase family. IspE subfamily.</text>
</comment>
<evidence type="ECO:0000255" key="1">
    <source>
        <dbReference type="HAMAP-Rule" id="MF_00061"/>
    </source>
</evidence>
<dbReference type="EC" id="2.7.1.148" evidence="1"/>
<dbReference type="EMBL" id="CP000319">
    <property type="protein sequence ID" value="ABE63951.1"/>
    <property type="molecule type" value="Genomic_DNA"/>
</dbReference>
<dbReference type="RefSeq" id="WP_011511607.1">
    <property type="nucleotide sequence ID" value="NC_007964.1"/>
</dbReference>
<dbReference type="SMR" id="Q1QIJ6"/>
<dbReference type="STRING" id="323097.Nham_3216"/>
<dbReference type="KEGG" id="nha:Nham_3216"/>
<dbReference type="eggNOG" id="COG1947">
    <property type="taxonomic scope" value="Bacteria"/>
</dbReference>
<dbReference type="HOGENOM" id="CLU_053057_1_0_5"/>
<dbReference type="OrthoDB" id="9809438at2"/>
<dbReference type="UniPathway" id="UPA00056">
    <property type="reaction ID" value="UER00094"/>
</dbReference>
<dbReference type="Proteomes" id="UP000001953">
    <property type="component" value="Chromosome"/>
</dbReference>
<dbReference type="GO" id="GO:0050515">
    <property type="term" value="F:4-(cytidine 5'-diphospho)-2-C-methyl-D-erythritol kinase activity"/>
    <property type="evidence" value="ECO:0007669"/>
    <property type="project" value="UniProtKB-UniRule"/>
</dbReference>
<dbReference type="GO" id="GO:0005524">
    <property type="term" value="F:ATP binding"/>
    <property type="evidence" value="ECO:0007669"/>
    <property type="project" value="UniProtKB-UniRule"/>
</dbReference>
<dbReference type="GO" id="GO:0019288">
    <property type="term" value="P:isopentenyl diphosphate biosynthetic process, methylerythritol 4-phosphate pathway"/>
    <property type="evidence" value="ECO:0007669"/>
    <property type="project" value="UniProtKB-UniRule"/>
</dbReference>
<dbReference type="GO" id="GO:0016114">
    <property type="term" value="P:terpenoid biosynthetic process"/>
    <property type="evidence" value="ECO:0007669"/>
    <property type="project" value="InterPro"/>
</dbReference>
<dbReference type="Gene3D" id="3.30.230.10">
    <property type="match status" value="1"/>
</dbReference>
<dbReference type="Gene3D" id="3.30.70.890">
    <property type="entry name" value="GHMP kinase, C-terminal domain"/>
    <property type="match status" value="1"/>
</dbReference>
<dbReference type="HAMAP" id="MF_00061">
    <property type="entry name" value="IspE"/>
    <property type="match status" value="1"/>
</dbReference>
<dbReference type="InterPro" id="IPR013750">
    <property type="entry name" value="GHMP_kinase_C_dom"/>
</dbReference>
<dbReference type="InterPro" id="IPR036554">
    <property type="entry name" value="GHMP_kinase_C_sf"/>
</dbReference>
<dbReference type="InterPro" id="IPR006204">
    <property type="entry name" value="GHMP_kinase_N_dom"/>
</dbReference>
<dbReference type="InterPro" id="IPR004424">
    <property type="entry name" value="IspE"/>
</dbReference>
<dbReference type="InterPro" id="IPR020568">
    <property type="entry name" value="Ribosomal_Su5_D2-typ_SF"/>
</dbReference>
<dbReference type="InterPro" id="IPR014721">
    <property type="entry name" value="Ribsml_uS5_D2-typ_fold_subgr"/>
</dbReference>
<dbReference type="NCBIfam" id="TIGR00154">
    <property type="entry name" value="ispE"/>
    <property type="match status" value="1"/>
</dbReference>
<dbReference type="NCBIfam" id="NF011202">
    <property type="entry name" value="PRK14608.1"/>
    <property type="match status" value="1"/>
</dbReference>
<dbReference type="PANTHER" id="PTHR43527">
    <property type="entry name" value="4-DIPHOSPHOCYTIDYL-2-C-METHYL-D-ERYTHRITOL KINASE, CHLOROPLASTIC"/>
    <property type="match status" value="1"/>
</dbReference>
<dbReference type="PANTHER" id="PTHR43527:SF2">
    <property type="entry name" value="4-DIPHOSPHOCYTIDYL-2-C-METHYL-D-ERYTHRITOL KINASE, CHLOROPLASTIC"/>
    <property type="match status" value="1"/>
</dbReference>
<dbReference type="Pfam" id="PF08544">
    <property type="entry name" value="GHMP_kinases_C"/>
    <property type="match status" value="1"/>
</dbReference>
<dbReference type="Pfam" id="PF00288">
    <property type="entry name" value="GHMP_kinases_N"/>
    <property type="match status" value="1"/>
</dbReference>
<dbReference type="PIRSF" id="PIRSF010376">
    <property type="entry name" value="IspE"/>
    <property type="match status" value="1"/>
</dbReference>
<dbReference type="SUPFAM" id="SSF55060">
    <property type="entry name" value="GHMP Kinase, C-terminal domain"/>
    <property type="match status" value="1"/>
</dbReference>
<dbReference type="SUPFAM" id="SSF54211">
    <property type="entry name" value="Ribosomal protein S5 domain 2-like"/>
    <property type="match status" value="1"/>
</dbReference>
<name>ISPE_NITHX</name>